<proteinExistence type="predicted"/>
<reference key="1">
    <citation type="journal article" date="1998" name="Microbiology">
        <title>A 35.7 kb DNA fragment from the Bacillus subtilis chromosome containing a putative 12.3 kb operon involved in hexuronate catabolism and a perfectly symmetrical hypothetical catabolite-responsive element.</title>
        <authorList>
            <person name="Rivolta C."/>
            <person name="Soldo B."/>
            <person name="Lazarevic V."/>
            <person name="Joris B."/>
            <person name="Mauel C."/>
            <person name="Karamata D."/>
        </authorList>
    </citation>
    <scope>NUCLEOTIDE SEQUENCE [GENOMIC DNA]</scope>
    <source>
        <strain>168</strain>
    </source>
</reference>
<reference key="2">
    <citation type="journal article" date="1997" name="Nature">
        <title>The complete genome sequence of the Gram-positive bacterium Bacillus subtilis.</title>
        <authorList>
            <person name="Kunst F."/>
            <person name="Ogasawara N."/>
            <person name="Moszer I."/>
            <person name="Albertini A.M."/>
            <person name="Alloni G."/>
            <person name="Azevedo V."/>
            <person name="Bertero M.G."/>
            <person name="Bessieres P."/>
            <person name="Bolotin A."/>
            <person name="Borchert S."/>
            <person name="Borriss R."/>
            <person name="Boursier L."/>
            <person name="Brans A."/>
            <person name="Braun M."/>
            <person name="Brignell S.C."/>
            <person name="Bron S."/>
            <person name="Brouillet S."/>
            <person name="Bruschi C.V."/>
            <person name="Caldwell B."/>
            <person name="Capuano V."/>
            <person name="Carter N.M."/>
            <person name="Choi S.-K."/>
            <person name="Codani J.-J."/>
            <person name="Connerton I.F."/>
            <person name="Cummings N.J."/>
            <person name="Daniel R.A."/>
            <person name="Denizot F."/>
            <person name="Devine K.M."/>
            <person name="Duesterhoeft A."/>
            <person name="Ehrlich S.D."/>
            <person name="Emmerson P.T."/>
            <person name="Entian K.-D."/>
            <person name="Errington J."/>
            <person name="Fabret C."/>
            <person name="Ferrari E."/>
            <person name="Foulger D."/>
            <person name="Fritz C."/>
            <person name="Fujita M."/>
            <person name="Fujita Y."/>
            <person name="Fuma S."/>
            <person name="Galizzi A."/>
            <person name="Galleron N."/>
            <person name="Ghim S.-Y."/>
            <person name="Glaser P."/>
            <person name="Goffeau A."/>
            <person name="Golightly E.J."/>
            <person name="Grandi G."/>
            <person name="Guiseppi G."/>
            <person name="Guy B.J."/>
            <person name="Haga K."/>
            <person name="Haiech J."/>
            <person name="Harwood C.R."/>
            <person name="Henaut A."/>
            <person name="Hilbert H."/>
            <person name="Holsappel S."/>
            <person name="Hosono S."/>
            <person name="Hullo M.-F."/>
            <person name="Itaya M."/>
            <person name="Jones L.-M."/>
            <person name="Joris B."/>
            <person name="Karamata D."/>
            <person name="Kasahara Y."/>
            <person name="Klaerr-Blanchard M."/>
            <person name="Klein C."/>
            <person name="Kobayashi Y."/>
            <person name="Koetter P."/>
            <person name="Koningstein G."/>
            <person name="Krogh S."/>
            <person name="Kumano M."/>
            <person name="Kurita K."/>
            <person name="Lapidus A."/>
            <person name="Lardinois S."/>
            <person name="Lauber J."/>
            <person name="Lazarevic V."/>
            <person name="Lee S.-M."/>
            <person name="Levine A."/>
            <person name="Liu H."/>
            <person name="Masuda S."/>
            <person name="Mauel C."/>
            <person name="Medigue C."/>
            <person name="Medina N."/>
            <person name="Mellado R.P."/>
            <person name="Mizuno M."/>
            <person name="Moestl D."/>
            <person name="Nakai S."/>
            <person name="Noback M."/>
            <person name="Noone D."/>
            <person name="O'Reilly M."/>
            <person name="Ogawa K."/>
            <person name="Ogiwara A."/>
            <person name="Oudega B."/>
            <person name="Park S.-H."/>
            <person name="Parro V."/>
            <person name="Pohl T.M."/>
            <person name="Portetelle D."/>
            <person name="Porwollik S."/>
            <person name="Prescott A.M."/>
            <person name="Presecan E."/>
            <person name="Pujic P."/>
            <person name="Purnelle B."/>
            <person name="Rapoport G."/>
            <person name="Rey M."/>
            <person name="Reynolds S."/>
            <person name="Rieger M."/>
            <person name="Rivolta C."/>
            <person name="Rocha E."/>
            <person name="Roche B."/>
            <person name="Rose M."/>
            <person name="Sadaie Y."/>
            <person name="Sato T."/>
            <person name="Scanlan E."/>
            <person name="Schleich S."/>
            <person name="Schroeter R."/>
            <person name="Scoffone F."/>
            <person name="Sekiguchi J."/>
            <person name="Sekowska A."/>
            <person name="Seror S.J."/>
            <person name="Serror P."/>
            <person name="Shin B.-S."/>
            <person name="Soldo B."/>
            <person name="Sorokin A."/>
            <person name="Tacconi E."/>
            <person name="Takagi T."/>
            <person name="Takahashi H."/>
            <person name="Takemaru K."/>
            <person name="Takeuchi M."/>
            <person name="Tamakoshi A."/>
            <person name="Tanaka T."/>
            <person name="Terpstra P."/>
            <person name="Tognoni A."/>
            <person name="Tosato V."/>
            <person name="Uchiyama S."/>
            <person name="Vandenbol M."/>
            <person name="Vannier F."/>
            <person name="Vassarotti A."/>
            <person name="Viari A."/>
            <person name="Wambutt R."/>
            <person name="Wedler E."/>
            <person name="Wedler H."/>
            <person name="Weitzenegger T."/>
            <person name="Winters P."/>
            <person name="Wipat A."/>
            <person name="Yamamoto H."/>
            <person name="Yamane K."/>
            <person name="Yasumoto K."/>
            <person name="Yata K."/>
            <person name="Yoshida K."/>
            <person name="Yoshikawa H.-F."/>
            <person name="Zumstein E."/>
            <person name="Yoshikawa H."/>
            <person name="Danchin A."/>
        </authorList>
    </citation>
    <scope>NUCLEOTIDE SEQUENCE [LARGE SCALE GENOMIC DNA]</scope>
    <source>
        <strain>168</strain>
    </source>
</reference>
<accession>O34681</accession>
<accession>Q796N9</accession>
<sequence>MAKAIKRIQKIEVTEEDQRKRDLREIEDALIDHKEAILETLHMLGHMNERGVLPLLRGLFGQGDKVLDILVKKADTEETANTLKNLLLLFGTLGMLDVKQLEPLILKVNAGVASAVEQKNSEEKTGYFDIIRSLKDPEINKSITLLFSFLKGMGQDTKELERTTQPPEHQKHHQEPREKRGMNKRD</sequence>
<name>YJGD_BACSU</name>
<gene>
    <name type="primary">yjgD</name>
    <name type="ordered locus">BSU12170</name>
</gene>
<dbReference type="EMBL" id="AF015825">
    <property type="protein sequence ID" value="AAC46313.1"/>
    <property type="molecule type" value="Genomic_DNA"/>
</dbReference>
<dbReference type="EMBL" id="AL009126">
    <property type="protein sequence ID" value="CAB13074.1"/>
    <property type="molecule type" value="Genomic_DNA"/>
</dbReference>
<dbReference type="PIR" id="F69850">
    <property type="entry name" value="F69850"/>
</dbReference>
<dbReference type="RefSeq" id="NP_389099.1">
    <property type="nucleotide sequence ID" value="NC_000964.3"/>
</dbReference>
<dbReference type="RefSeq" id="WP_003232799.1">
    <property type="nucleotide sequence ID" value="NZ_OZ025638.1"/>
</dbReference>
<dbReference type="FunCoup" id="O34681">
    <property type="interactions" value="40"/>
</dbReference>
<dbReference type="STRING" id="224308.BSU12170"/>
<dbReference type="PaxDb" id="224308-BSU12170"/>
<dbReference type="EnsemblBacteria" id="CAB13074">
    <property type="protein sequence ID" value="CAB13074"/>
    <property type="gene ID" value="BSU_12170"/>
</dbReference>
<dbReference type="GeneID" id="939826"/>
<dbReference type="KEGG" id="bsu:BSU12170"/>
<dbReference type="PATRIC" id="fig|224308.179.peg.1315"/>
<dbReference type="eggNOG" id="COG2427">
    <property type="taxonomic scope" value="Bacteria"/>
</dbReference>
<dbReference type="InParanoid" id="O34681"/>
<dbReference type="OrthoDB" id="147801at2"/>
<dbReference type="BioCyc" id="BSUB:BSU12170-MONOMER"/>
<dbReference type="Proteomes" id="UP000001570">
    <property type="component" value="Chromosome"/>
</dbReference>
<dbReference type="InterPro" id="IPR012440">
    <property type="entry name" value="DUF1641"/>
</dbReference>
<dbReference type="PANTHER" id="PTHR38433">
    <property type="match status" value="1"/>
</dbReference>
<dbReference type="PANTHER" id="PTHR38433:SF1">
    <property type="entry name" value="DUF1641 DOMAIN-CONTAINING PROTEIN"/>
    <property type="match status" value="1"/>
</dbReference>
<dbReference type="Pfam" id="PF07849">
    <property type="entry name" value="DUF1641"/>
    <property type="match status" value="1"/>
</dbReference>
<feature type="chain" id="PRO_0000388344" description="Uncharacterized protein YjgD">
    <location>
        <begin position="1"/>
        <end position="186"/>
    </location>
</feature>
<feature type="region of interest" description="Disordered" evidence="1">
    <location>
        <begin position="156"/>
        <end position="186"/>
    </location>
</feature>
<feature type="compositionally biased region" description="Basic and acidic residues" evidence="1">
    <location>
        <begin position="173"/>
        <end position="186"/>
    </location>
</feature>
<organism>
    <name type="scientific">Bacillus subtilis (strain 168)</name>
    <dbReference type="NCBI Taxonomy" id="224308"/>
    <lineage>
        <taxon>Bacteria</taxon>
        <taxon>Bacillati</taxon>
        <taxon>Bacillota</taxon>
        <taxon>Bacilli</taxon>
        <taxon>Bacillales</taxon>
        <taxon>Bacillaceae</taxon>
        <taxon>Bacillus</taxon>
    </lineage>
</organism>
<keyword id="KW-1185">Reference proteome</keyword>
<protein>
    <recommendedName>
        <fullName>Uncharacterized protein YjgD</fullName>
    </recommendedName>
</protein>
<evidence type="ECO:0000256" key="1">
    <source>
        <dbReference type="SAM" id="MobiDB-lite"/>
    </source>
</evidence>